<accession>Q2P0X1</accession>
<sequence length="906" mass="96366">MSQQTTIRKLAELVNTPVDKLLVQLAEAGMKFSGPDQVVTSTEKMKLLGFLRRTHGKAETPAEAASEAAKKITLNRRKLQEVTVSAGRTKTTVNVEVRQKRTYVKSENEGSGRATPMTPDEERADILAKLAASRQRNLDEQQRLAESDRVRDEEIQRKRDEEQAAKDRAEAERKAAEEAAAAASAPAPAPVAAAPTPSAAAPAARAPSSPSSAPRPSRPGGASPASRPSTPARPDDRNNAAKHKTRGSHVMVAGVEDDDATKRFAGQLHLSAADRARRSNVRGKPTGRPGSSSSRRGNDNGRGSNQANSGPHGFERPTAPVVREVAIGETITVADLAQKLALKGGDVVKALFKMGVMATITQSIDHDTAALVTEELGHKAVRADNADFEDALLAHAEDAQGDTTTRPPVVTIMGHVDHGKTSLLDYIRRTKIASGEAGGITQHIGAYHVETDRGVISFLDTPGHAAFTSMRARGAKITDIVVLVVAADDGVMPQTKEAVAHAKAAGVPLIVAVNKIDKAGADPLRVKNELLAENVVAEDFGGDTQFIEVSAKVGTGVDTLLDAISLQAEVLELKAVAEGRASGTVIESSLDKGRGPVATVLVQQGALKRGDYLVCGIQYGRVRALFDETGHQPGSAGPSIPVQVLGLSGVPEAGDDFVVVDDERLAKDVAQQRETKRRESRLVASATNRMEDILAQMGKGEGQQVLNLVIKADVQGSVEALKQSLVALSNEDIRINVIHSGVGGITESDANSAAASKATIIGFNVRADASARKIVESNGVDLRYFSIIYDVIDQVKQVASGLLGVEIREEIMGIAQVRDVFRSSKFGAVAGCMIIEGVVKRSKPIRVLRDSVVVFEGELESLRRFKENVDEVRNGNECGIGVKAYNDVKAGDQIECFERIEVARTL</sequence>
<evidence type="ECO:0000250" key="1"/>
<evidence type="ECO:0000255" key="2">
    <source>
        <dbReference type="HAMAP-Rule" id="MF_00100"/>
    </source>
</evidence>
<evidence type="ECO:0000256" key="3">
    <source>
        <dbReference type="SAM" id="MobiDB-lite"/>
    </source>
</evidence>
<proteinExistence type="inferred from homology"/>
<feature type="chain" id="PRO_1000008371" description="Translation initiation factor IF-2">
    <location>
        <begin position="1"/>
        <end position="906"/>
    </location>
</feature>
<feature type="domain" description="tr-type G">
    <location>
        <begin position="405"/>
        <end position="574"/>
    </location>
</feature>
<feature type="region of interest" description="Disordered" evidence="3">
    <location>
        <begin position="134"/>
        <end position="250"/>
    </location>
</feature>
<feature type="region of interest" description="Disordered" evidence="3">
    <location>
        <begin position="269"/>
        <end position="317"/>
    </location>
</feature>
<feature type="region of interest" description="G1" evidence="1">
    <location>
        <begin position="414"/>
        <end position="421"/>
    </location>
</feature>
<feature type="region of interest" description="G2" evidence="1">
    <location>
        <begin position="439"/>
        <end position="443"/>
    </location>
</feature>
<feature type="region of interest" description="G3" evidence="1">
    <location>
        <begin position="460"/>
        <end position="463"/>
    </location>
</feature>
<feature type="region of interest" description="G4" evidence="1">
    <location>
        <begin position="514"/>
        <end position="517"/>
    </location>
</feature>
<feature type="region of interest" description="G5" evidence="1">
    <location>
        <begin position="550"/>
        <end position="552"/>
    </location>
</feature>
<feature type="compositionally biased region" description="Basic and acidic residues" evidence="3">
    <location>
        <begin position="136"/>
        <end position="177"/>
    </location>
</feature>
<feature type="compositionally biased region" description="Low complexity" evidence="3">
    <location>
        <begin position="178"/>
        <end position="232"/>
    </location>
</feature>
<feature type="compositionally biased region" description="Low complexity" evidence="3">
    <location>
        <begin position="287"/>
        <end position="305"/>
    </location>
</feature>
<feature type="binding site" evidence="2">
    <location>
        <begin position="414"/>
        <end position="421"/>
    </location>
    <ligand>
        <name>GTP</name>
        <dbReference type="ChEBI" id="CHEBI:37565"/>
    </ligand>
</feature>
<feature type="binding site" evidence="2">
    <location>
        <begin position="460"/>
        <end position="464"/>
    </location>
    <ligand>
        <name>GTP</name>
        <dbReference type="ChEBI" id="CHEBI:37565"/>
    </ligand>
</feature>
<feature type="binding site" evidence="2">
    <location>
        <begin position="514"/>
        <end position="517"/>
    </location>
    <ligand>
        <name>GTP</name>
        <dbReference type="ChEBI" id="CHEBI:37565"/>
    </ligand>
</feature>
<comment type="function">
    <text evidence="2">One of the essential components for the initiation of protein synthesis. Protects formylmethionyl-tRNA from spontaneous hydrolysis and promotes its binding to the 30S ribosomal subunits. Also involved in the hydrolysis of GTP during the formation of the 70S ribosomal complex.</text>
</comment>
<comment type="subcellular location">
    <subcellularLocation>
        <location evidence="2">Cytoplasm</location>
    </subcellularLocation>
</comment>
<comment type="similarity">
    <text evidence="2">Belongs to the TRAFAC class translation factor GTPase superfamily. Classic translation factor GTPase family. IF-2 subfamily.</text>
</comment>
<name>IF2_XANOM</name>
<keyword id="KW-0963">Cytoplasm</keyword>
<keyword id="KW-0342">GTP-binding</keyword>
<keyword id="KW-0396">Initiation factor</keyword>
<keyword id="KW-0547">Nucleotide-binding</keyword>
<keyword id="KW-0648">Protein biosynthesis</keyword>
<protein>
    <recommendedName>
        <fullName evidence="2">Translation initiation factor IF-2</fullName>
    </recommendedName>
</protein>
<dbReference type="EMBL" id="AP008229">
    <property type="protein sequence ID" value="BAE69806.1"/>
    <property type="molecule type" value="Genomic_DNA"/>
</dbReference>
<dbReference type="RefSeq" id="WP_011409053.1">
    <property type="nucleotide sequence ID" value="NC_007705.1"/>
</dbReference>
<dbReference type="SMR" id="Q2P0X1"/>
<dbReference type="KEGG" id="xom:XOO3051"/>
<dbReference type="HOGENOM" id="CLU_006301_6_0_6"/>
<dbReference type="GO" id="GO:0005829">
    <property type="term" value="C:cytosol"/>
    <property type="evidence" value="ECO:0007669"/>
    <property type="project" value="TreeGrafter"/>
</dbReference>
<dbReference type="GO" id="GO:0005525">
    <property type="term" value="F:GTP binding"/>
    <property type="evidence" value="ECO:0007669"/>
    <property type="project" value="UniProtKB-KW"/>
</dbReference>
<dbReference type="GO" id="GO:0003924">
    <property type="term" value="F:GTPase activity"/>
    <property type="evidence" value="ECO:0007669"/>
    <property type="project" value="UniProtKB-UniRule"/>
</dbReference>
<dbReference type="GO" id="GO:0097216">
    <property type="term" value="F:guanosine tetraphosphate binding"/>
    <property type="evidence" value="ECO:0007669"/>
    <property type="project" value="UniProtKB-ARBA"/>
</dbReference>
<dbReference type="GO" id="GO:0003743">
    <property type="term" value="F:translation initiation factor activity"/>
    <property type="evidence" value="ECO:0007669"/>
    <property type="project" value="UniProtKB-UniRule"/>
</dbReference>
<dbReference type="CDD" id="cd01887">
    <property type="entry name" value="IF2_eIF5B"/>
    <property type="match status" value="1"/>
</dbReference>
<dbReference type="CDD" id="cd03702">
    <property type="entry name" value="IF2_mtIF2_II"/>
    <property type="match status" value="1"/>
</dbReference>
<dbReference type="CDD" id="cd03692">
    <property type="entry name" value="mtIF2_IVc"/>
    <property type="match status" value="1"/>
</dbReference>
<dbReference type="FunFam" id="2.40.30.10:FF:000008">
    <property type="entry name" value="Translation initiation factor IF-2"/>
    <property type="match status" value="1"/>
</dbReference>
<dbReference type="FunFam" id="2.40.30.10:FF:000054">
    <property type="entry name" value="Translation initiation factor IF-2"/>
    <property type="match status" value="1"/>
</dbReference>
<dbReference type="FunFam" id="3.40.50.10050:FF:000001">
    <property type="entry name" value="Translation initiation factor IF-2"/>
    <property type="match status" value="1"/>
</dbReference>
<dbReference type="FunFam" id="3.40.50.300:FF:000019">
    <property type="entry name" value="Translation initiation factor IF-2"/>
    <property type="match status" value="1"/>
</dbReference>
<dbReference type="Gene3D" id="3.40.50.300">
    <property type="entry name" value="P-loop containing nucleotide triphosphate hydrolases"/>
    <property type="match status" value="1"/>
</dbReference>
<dbReference type="Gene3D" id="3.30.56.50">
    <property type="entry name" value="Putative DNA-binding domain, N-terminal subdomain of bacterial translation initiation factor IF2"/>
    <property type="match status" value="1"/>
</dbReference>
<dbReference type="Gene3D" id="2.40.30.10">
    <property type="entry name" value="Translation factors"/>
    <property type="match status" value="2"/>
</dbReference>
<dbReference type="Gene3D" id="3.40.50.10050">
    <property type="entry name" value="Translation initiation factor IF- 2, domain 3"/>
    <property type="match status" value="1"/>
</dbReference>
<dbReference type="HAMAP" id="MF_00100_B">
    <property type="entry name" value="IF_2_B"/>
    <property type="match status" value="1"/>
</dbReference>
<dbReference type="InterPro" id="IPR009061">
    <property type="entry name" value="DNA-bd_dom_put_sf"/>
</dbReference>
<dbReference type="InterPro" id="IPR053905">
    <property type="entry name" value="EF-G-like_DII"/>
</dbReference>
<dbReference type="InterPro" id="IPR004161">
    <property type="entry name" value="EFTu-like_2"/>
</dbReference>
<dbReference type="InterPro" id="IPR013575">
    <property type="entry name" value="IF2_assoc_dom_bac"/>
</dbReference>
<dbReference type="InterPro" id="IPR044145">
    <property type="entry name" value="IF2_II"/>
</dbReference>
<dbReference type="InterPro" id="IPR006847">
    <property type="entry name" value="IF2_N"/>
</dbReference>
<dbReference type="InterPro" id="IPR027417">
    <property type="entry name" value="P-loop_NTPase"/>
</dbReference>
<dbReference type="InterPro" id="IPR005225">
    <property type="entry name" value="Small_GTP-bd"/>
</dbReference>
<dbReference type="InterPro" id="IPR000795">
    <property type="entry name" value="T_Tr_GTP-bd_dom"/>
</dbReference>
<dbReference type="InterPro" id="IPR000178">
    <property type="entry name" value="TF_IF2_bacterial-like"/>
</dbReference>
<dbReference type="InterPro" id="IPR015760">
    <property type="entry name" value="TIF_IF2"/>
</dbReference>
<dbReference type="InterPro" id="IPR023115">
    <property type="entry name" value="TIF_IF2_dom3"/>
</dbReference>
<dbReference type="InterPro" id="IPR036925">
    <property type="entry name" value="TIF_IF2_dom3_sf"/>
</dbReference>
<dbReference type="InterPro" id="IPR009000">
    <property type="entry name" value="Transl_B-barrel_sf"/>
</dbReference>
<dbReference type="NCBIfam" id="TIGR00487">
    <property type="entry name" value="IF-2"/>
    <property type="match status" value="1"/>
</dbReference>
<dbReference type="NCBIfam" id="TIGR00231">
    <property type="entry name" value="small_GTP"/>
    <property type="match status" value="1"/>
</dbReference>
<dbReference type="PANTHER" id="PTHR43381:SF5">
    <property type="entry name" value="TR-TYPE G DOMAIN-CONTAINING PROTEIN"/>
    <property type="match status" value="1"/>
</dbReference>
<dbReference type="PANTHER" id="PTHR43381">
    <property type="entry name" value="TRANSLATION INITIATION FACTOR IF-2-RELATED"/>
    <property type="match status" value="1"/>
</dbReference>
<dbReference type="Pfam" id="PF22042">
    <property type="entry name" value="EF-G_D2"/>
    <property type="match status" value="1"/>
</dbReference>
<dbReference type="Pfam" id="PF00009">
    <property type="entry name" value="GTP_EFTU"/>
    <property type="match status" value="1"/>
</dbReference>
<dbReference type="Pfam" id="PF03144">
    <property type="entry name" value="GTP_EFTU_D2"/>
    <property type="match status" value="1"/>
</dbReference>
<dbReference type="Pfam" id="PF11987">
    <property type="entry name" value="IF-2"/>
    <property type="match status" value="1"/>
</dbReference>
<dbReference type="Pfam" id="PF08364">
    <property type="entry name" value="IF2_assoc"/>
    <property type="match status" value="1"/>
</dbReference>
<dbReference type="Pfam" id="PF04760">
    <property type="entry name" value="IF2_N"/>
    <property type="match status" value="1"/>
</dbReference>
<dbReference type="SUPFAM" id="SSF52156">
    <property type="entry name" value="Initiation factor IF2/eIF5b, domain 3"/>
    <property type="match status" value="1"/>
</dbReference>
<dbReference type="SUPFAM" id="SSF52540">
    <property type="entry name" value="P-loop containing nucleoside triphosphate hydrolases"/>
    <property type="match status" value="1"/>
</dbReference>
<dbReference type="SUPFAM" id="SSF46955">
    <property type="entry name" value="Putative DNA-binding domain"/>
    <property type="match status" value="1"/>
</dbReference>
<dbReference type="SUPFAM" id="SSF50447">
    <property type="entry name" value="Translation proteins"/>
    <property type="match status" value="2"/>
</dbReference>
<dbReference type="PROSITE" id="PS51722">
    <property type="entry name" value="G_TR_2"/>
    <property type="match status" value="1"/>
</dbReference>
<dbReference type="PROSITE" id="PS01176">
    <property type="entry name" value="IF2"/>
    <property type="match status" value="1"/>
</dbReference>
<gene>
    <name evidence="2" type="primary">infB</name>
    <name type="ordered locus">XOO3051</name>
</gene>
<organism>
    <name type="scientific">Xanthomonas oryzae pv. oryzae (strain MAFF 311018)</name>
    <dbReference type="NCBI Taxonomy" id="342109"/>
    <lineage>
        <taxon>Bacteria</taxon>
        <taxon>Pseudomonadati</taxon>
        <taxon>Pseudomonadota</taxon>
        <taxon>Gammaproteobacteria</taxon>
        <taxon>Lysobacterales</taxon>
        <taxon>Lysobacteraceae</taxon>
        <taxon>Xanthomonas</taxon>
    </lineage>
</organism>
<reference key="1">
    <citation type="journal article" date="2005" name="Jpn. Agric. Res. Q.">
        <title>Genome sequence of Xanthomonas oryzae pv. oryzae suggests contribution of large numbers of effector genes and insertion sequences to its race diversity.</title>
        <authorList>
            <person name="Ochiai H."/>
            <person name="Inoue Y."/>
            <person name="Takeya M."/>
            <person name="Sasaki A."/>
            <person name="Kaku H."/>
        </authorList>
    </citation>
    <scope>NUCLEOTIDE SEQUENCE [LARGE SCALE GENOMIC DNA]</scope>
    <source>
        <strain>MAFF 311018</strain>
    </source>
</reference>